<dbReference type="EMBL" id="AE014298">
    <property type="protein sequence ID" value="AAF48428.1"/>
    <property type="molecule type" value="Genomic_DNA"/>
</dbReference>
<dbReference type="EMBL" id="BT031045">
    <property type="protein sequence ID" value="ABV82427.1"/>
    <property type="molecule type" value="mRNA"/>
</dbReference>
<dbReference type="RefSeq" id="NP_001259561.1">
    <property type="nucleotide sequence ID" value="NM_001272632.2"/>
</dbReference>
<dbReference type="RefSeq" id="NP_573005.1">
    <property type="nucleotide sequence ID" value="NM_132777.3"/>
</dbReference>
<dbReference type="PDB" id="4V6W">
    <property type="method" value="EM"/>
    <property type="resolution" value="6.00 A"/>
    <property type="chains" value="Cj=1-93"/>
</dbReference>
<dbReference type="PDB" id="6XU8">
    <property type="method" value="EM"/>
    <property type="resolution" value="3.00 A"/>
    <property type="chains" value="Cj=2-88"/>
</dbReference>
<dbReference type="PDBsum" id="4V6W"/>
<dbReference type="PDBsum" id="6XU8"/>
<dbReference type="EMDB" id="EMD-10624"/>
<dbReference type="SMR" id="Q9VXX8"/>
<dbReference type="BioGRID" id="58801">
    <property type="interactions" value="107"/>
</dbReference>
<dbReference type="DIP" id="DIP-18114N"/>
<dbReference type="FunCoup" id="Q9VXX8">
    <property type="interactions" value="566"/>
</dbReference>
<dbReference type="IntAct" id="Q9VXX8">
    <property type="interactions" value="12"/>
</dbReference>
<dbReference type="STRING" id="7227.FBpp0073844"/>
<dbReference type="PaxDb" id="7227-FBpp0073844"/>
<dbReference type="DNASU" id="32446"/>
<dbReference type="EnsemblMetazoa" id="FBtr0074027">
    <property type="protein sequence ID" value="FBpp0073844"/>
    <property type="gene ID" value="FBgn0030616"/>
</dbReference>
<dbReference type="EnsemblMetazoa" id="FBtr0330403">
    <property type="protein sequence ID" value="FBpp0303429"/>
    <property type="gene ID" value="FBgn0030616"/>
</dbReference>
<dbReference type="GeneID" id="32446"/>
<dbReference type="KEGG" id="dme:Dmel_CG9091"/>
<dbReference type="AGR" id="FB:FBgn0030616"/>
<dbReference type="CTD" id="32446"/>
<dbReference type="FlyBase" id="FBgn0030616">
    <property type="gene designation" value="RpL37-1"/>
</dbReference>
<dbReference type="VEuPathDB" id="VectorBase:FBgn0030616"/>
<dbReference type="eggNOG" id="KOG3475">
    <property type="taxonomic scope" value="Eukaryota"/>
</dbReference>
<dbReference type="GeneTree" id="ENSGT00940000168926"/>
<dbReference type="HOGENOM" id="CLU_150908_0_0_1"/>
<dbReference type="InParanoid" id="Q9VXX8"/>
<dbReference type="OMA" id="RMAYLKH"/>
<dbReference type="OrthoDB" id="10259236at2759"/>
<dbReference type="PhylomeDB" id="Q9VXX8"/>
<dbReference type="Reactome" id="R-DME-156827">
    <property type="pathway name" value="L13a-mediated translational silencing of Ceruloplasmin expression"/>
</dbReference>
<dbReference type="Reactome" id="R-DME-1799339">
    <property type="pathway name" value="SRP-dependent cotranslational protein targeting to membrane"/>
</dbReference>
<dbReference type="Reactome" id="R-DME-72689">
    <property type="pathway name" value="Formation of a pool of free 40S subunits"/>
</dbReference>
<dbReference type="Reactome" id="R-DME-72706">
    <property type="pathway name" value="GTP hydrolysis and joining of the 60S ribosomal subunit"/>
</dbReference>
<dbReference type="Reactome" id="R-DME-975956">
    <property type="pathway name" value="Nonsense Mediated Decay (NMD) independent of the Exon Junction Complex (EJC)"/>
</dbReference>
<dbReference type="Reactome" id="R-DME-975957">
    <property type="pathway name" value="Nonsense Mediated Decay (NMD) enhanced by the Exon Junction Complex (EJC)"/>
</dbReference>
<dbReference type="SignaLink" id="Q9VXX8"/>
<dbReference type="BioGRID-ORCS" id="32446">
    <property type="hits" value="0 hits in 1 CRISPR screen"/>
</dbReference>
<dbReference type="ChiTaRS" id="RpL37a">
    <property type="organism name" value="fly"/>
</dbReference>
<dbReference type="GenomeRNAi" id="32446"/>
<dbReference type="PRO" id="PR:Q9VXX8"/>
<dbReference type="Proteomes" id="UP000000803">
    <property type="component" value="Chromosome X"/>
</dbReference>
<dbReference type="Bgee" id="FBgn0030616">
    <property type="expression patterns" value="Expressed in adult enteroendocrine precursor cell in adult midgut (Drosophila) and 278 other cell types or tissues"/>
</dbReference>
<dbReference type="ExpressionAtlas" id="Q9VXX8">
    <property type="expression patterns" value="baseline and differential"/>
</dbReference>
<dbReference type="GO" id="GO:0022625">
    <property type="term" value="C:cytosolic large ribosomal subunit"/>
    <property type="evidence" value="ECO:0000318"/>
    <property type="project" value="GO_Central"/>
</dbReference>
<dbReference type="GO" id="GO:0022626">
    <property type="term" value="C:cytosolic ribosome"/>
    <property type="evidence" value="ECO:0000314"/>
    <property type="project" value="FlyBase"/>
</dbReference>
<dbReference type="GO" id="GO:0003723">
    <property type="term" value="F:RNA binding"/>
    <property type="evidence" value="ECO:0000318"/>
    <property type="project" value="GO_Central"/>
</dbReference>
<dbReference type="GO" id="GO:0019843">
    <property type="term" value="F:rRNA binding"/>
    <property type="evidence" value="ECO:0007669"/>
    <property type="project" value="UniProtKB-KW"/>
</dbReference>
<dbReference type="GO" id="GO:0003735">
    <property type="term" value="F:structural constituent of ribosome"/>
    <property type="evidence" value="ECO:0000314"/>
    <property type="project" value="FlyBase"/>
</dbReference>
<dbReference type="GO" id="GO:0008270">
    <property type="term" value="F:zinc ion binding"/>
    <property type="evidence" value="ECO:0007669"/>
    <property type="project" value="UniProtKB-KW"/>
</dbReference>
<dbReference type="GO" id="GO:0002181">
    <property type="term" value="P:cytoplasmic translation"/>
    <property type="evidence" value="ECO:0000304"/>
    <property type="project" value="FlyBase"/>
</dbReference>
<dbReference type="FunFam" id="2.20.25.30:FF:000001">
    <property type="entry name" value="Ribosomal protein L37"/>
    <property type="match status" value="1"/>
</dbReference>
<dbReference type="Gene3D" id="2.20.25.30">
    <property type="match status" value="1"/>
</dbReference>
<dbReference type="HAMAP" id="MF_00547">
    <property type="entry name" value="Ribosomal_eL37"/>
    <property type="match status" value="1"/>
</dbReference>
<dbReference type="InterPro" id="IPR001569">
    <property type="entry name" value="Ribosomal_eL37"/>
</dbReference>
<dbReference type="InterPro" id="IPR011331">
    <property type="entry name" value="Ribosomal_eL37/eL43"/>
</dbReference>
<dbReference type="InterPro" id="IPR018267">
    <property type="entry name" value="Ribosomal_eL37_CS"/>
</dbReference>
<dbReference type="InterPro" id="IPR011332">
    <property type="entry name" value="Ribosomal_zn-bd"/>
</dbReference>
<dbReference type="NCBIfam" id="NF003214">
    <property type="entry name" value="PRK04179.1"/>
    <property type="match status" value="1"/>
</dbReference>
<dbReference type="PANTHER" id="PTHR10768">
    <property type="entry name" value="60S RIBOSOMAL PROTEIN L37"/>
    <property type="match status" value="1"/>
</dbReference>
<dbReference type="PANTHER" id="PTHR10768:SF0">
    <property type="entry name" value="RIBOSOMAL PROTEIN L37"/>
    <property type="match status" value="1"/>
</dbReference>
<dbReference type="Pfam" id="PF01907">
    <property type="entry name" value="Ribosomal_L37e"/>
    <property type="match status" value="1"/>
</dbReference>
<dbReference type="SUPFAM" id="SSF57829">
    <property type="entry name" value="Zn-binding ribosomal proteins"/>
    <property type="match status" value="1"/>
</dbReference>
<dbReference type="PROSITE" id="PS01077">
    <property type="entry name" value="RIBOSOMAL_L37E"/>
    <property type="match status" value="1"/>
</dbReference>
<proteinExistence type="evidence at protein level"/>
<gene>
    <name evidence="4" type="primary">RpL37-1</name>
    <name evidence="4" type="synonym">RpL37a</name>
    <name evidence="4" type="ORF">CG9091</name>
</gene>
<feature type="chain" id="PRO_0000139710" description="Large ribosomal subunit protein eL37A">
    <location>
        <begin position="1"/>
        <end position="93"/>
    </location>
</feature>
<feature type="zinc finger region" description="C4-type" evidence="2">
    <location>
        <begin position="19"/>
        <end position="37"/>
    </location>
</feature>
<feature type="binding site" evidence="1">
    <location>
        <position position="19"/>
    </location>
    <ligand>
        <name>Zn(2+)</name>
        <dbReference type="ChEBI" id="CHEBI:29105"/>
    </ligand>
</feature>
<feature type="binding site" evidence="1">
    <location>
        <position position="22"/>
    </location>
    <ligand>
        <name>Zn(2+)</name>
        <dbReference type="ChEBI" id="CHEBI:29105"/>
    </ligand>
</feature>
<feature type="binding site" evidence="1">
    <location>
        <position position="34"/>
    </location>
    <ligand>
        <name>Zn(2+)</name>
        <dbReference type="ChEBI" id="CHEBI:29105"/>
    </ligand>
</feature>
<feature type="binding site" evidence="1">
    <location>
        <position position="37"/>
    </location>
    <ligand>
        <name>Zn(2+)</name>
        <dbReference type="ChEBI" id="CHEBI:29105"/>
    </ligand>
</feature>
<reference key="1">
    <citation type="journal article" date="2000" name="Science">
        <title>The genome sequence of Drosophila melanogaster.</title>
        <authorList>
            <person name="Adams M.D."/>
            <person name="Celniker S.E."/>
            <person name="Holt R.A."/>
            <person name="Evans C.A."/>
            <person name="Gocayne J.D."/>
            <person name="Amanatides P.G."/>
            <person name="Scherer S.E."/>
            <person name="Li P.W."/>
            <person name="Hoskins R.A."/>
            <person name="Galle R.F."/>
            <person name="George R.A."/>
            <person name="Lewis S.E."/>
            <person name="Richards S."/>
            <person name="Ashburner M."/>
            <person name="Henderson S.N."/>
            <person name="Sutton G.G."/>
            <person name="Wortman J.R."/>
            <person name="Yandell M.D."/>
            <person name="Zhang Q."/>
            <person name="Chen L.X."/>
            <person name="Brandon R.C."/>
            <person name="Rogers Y.-H.C."/>
            <person name="Blazej R.G."/>
            <person name="Champe M."/>
            <person name="Pfeiffer B.D."/>
            <person name="Wan K.H."/>
            <person name="Doyle C."/>
            <person name="Baxter E.G."/>
            <person name="Helt G."/>
            <person name="Nelson C.R."/>
            <person name="Miklos G.L.G."/>
            <person name="Abril J.F."/>
            <person name="Agbayani A."/>
            <person name="An H.-J."/>
            <person name="Andrews-Pfannkoch C."/>
            <person name="Baldwin D."/>
            <person name="Ballew R.M."/>
            <person name="Basu A."/>
            <person name="Baxendale J."/>
            <person name="Bayraktaroglu L."/>
            <person name="Beasley E.M."/>
            <person name="Beeson K.Y."/>
            <person name="Benos P.V."/>
            <person name="Berman B.P."/>
            <person name="Bhandari D."/>
            <person name="Bolshakov S."/>
            <person name="Borkova D."/>
            <person name="Botchan M.R."/>
            <person name="Bouck J."/>
            <person name="Brokstein P."/>
            <person name="Brottier P."/>
            <person name="Burtis K.C."/>
            <person name="Busam D.A."/>
            <person name="Butler H."/>
            <person name="Cadieu E."/>
            <person name="Center A."/>
            <person name="Chandra I."/>
            <person name="Cherry J.M."/>
            <person name="Cawley S."/>
            <person name="Dahlke C."/>
            <person name="Davenport L.B."/>
            <person name="Davies P."/>
            <person name="de Pablos B."/>
            <person name="Delcher A."/>
            <person name="Deng Z."/>
            <person name="Mays A.D."/>
            <person name="Dew I."/>
            <person name="Dietz S.M."/>
            <person name="Dodson K."/>
            <person name="Doup L.E."/>
            <person name="Downes M."/>
            <person name="Dugan-Rocha S."/>
            <person name="Dunkov B.C."/>
            <person name="Dunn P."/>
            <person name="Durbin K.J."/>
            <person name="Evangelista C.C."/>
            <person name="Ferraz C."/>
            <person name="Ferriera S."/>
            <person name="Fleischmann W."/>
            <person name="Fosler C."/>
            <person name="Gabrielian A.E."/>
            <person name="Garg N.S."/>
            <person name="Gelbart W.M."/>
            <person name="Glasser K."/>
            <person name="Glodek A."/>
            <person name="Gong F."/>
            <person name="Gorrell J.H."/>
            <person name="Gu Z."/>
            <person name="Guan P."/>
            <person name="Harris M."/>
            <person name="Harris N.L."/>
            <person name="Harvey D.A."/>
            <person name="Heiman T.J."/>
            <person name="Hernandez J.R."/>
            <person name="Houck J."/>
            <person name="Hostin D."/>
            <person name="Houston K.A."/>
            <person name="Howland T.J."/>
            <person name="Wei M.-H."/>
            <person name="Ibegwam C."/>
            <person name="Jalali M."/>
            <person name="Kalush F."/>
            <person name="Karpen G.H."/>
            <person name="Ke Z."/>
            <person name="Kennison J.A."/>
            <person name="Ketchum K.A."/>
            <person name="Kimmel B.E."/>
            <person name="Kodira C.D."/>
            <person name="Kraft C.L."/>
            <person name="Kravitz S."/>
            <person name="Kulp D."/>
            <person name="Lai Z."/>
            <person name="Lasko P."/>
            <person name="Lei Y."/>
            <person name="Levitsky A.A."/>
            <person name="Li J.H."/>
            <person name="Li Z."/>
            <person name="Liang Y."/>
            <person name="Lin X."/>
            <person name="Liu X."/>
            <person name="Mattei B."/>
            <person name="McIntosh T.C."/>
            <person name="McLeod M.P."/>
            <person name="McPherson D."/>
            <person name="Merkulov G."/>
            <person name="Milshina N.V."/>
            <person name="Mobarry C."/>
            <person name="Morris J."/>
            <person name="Moshrefi A."/>
            <person name="Mount S.M."/>
            <person name="Moy M."/>
            <person name="Murphy B."/>
            <person name="Murphy L."/>
            <person name="Muzny D.M."/>
            <person name="Nelson D.L."/>
            <person name="Nelson D.R."/>
            <person name="Nelson K.A."/>
            <person name="Nixon K."/>
            <person name="Nusskern D.R."/>
            <person name="Pacleb J.M."/>
            <person name="Palazzolo M."/>
            <person name="Pittman G.S."/>
            <person name="Pan S."/>
            <person name="Pollard J."/>
            <person name="Puri V."/>
            <person name="Reese M.G."/>
            <person name="Reinert K."/>
            <person name="Remington K."/>
            <person name="Saunders R.D.C."/>
            <person name="Scheeler F."/>
            <person name="Shen H."/>
            <person name="Shue B.C."/>
            <person name="Siden-Kiamos I."/>
            <person name="Simpson M."/>
            <person name="Skupski M.P."/>
            <person name="Smith T.J."/>
            <person name="Spier E."/>
            <person name="Spradling A.C."/>
            <person name="Stapleton M."/>
            <person name="Strong R."/>
            <person name="Sun E."/>
            <person name="Svirskas R."/>
            <person name="Tector C."/>
            <person name="Turner R."/>
            <person name="Venter E."/>
            <person name="Wang A.H."/>
            <person name="Wang X."/>
            <person name="Wang Z.-Y."/>
            <person name="Wassarman D.A."/>
            <person name="Weinstock G.M."/>
            <person name="Weissenbach J."/>
            <person name="Williams S.M."/>
            <person name="Woodage T."/>
            <person name="Worley K.C."/>
            <person name="Wu D."/>
            <person name="Yang S."/>
            <person name="Yao Q.A."/>
            <person name="Ye J."/>
            <person name="Yeh R.-F."/>
            <person name="Zaveri J.S."/>
            <person name="Zhan M."/>
            <person name="Zhang G."/>
            <person name="Zhao Q."/>
            <person name="Zheng L."/>
            <person name="Zheng X.H."/>
            <person name="Zhong F.N."/>
            <person name="Zhong W."/>
            <person name="Zhou X."/>
            <person name="Zhu S.C."/>
            <person name="Zhu X."/>
            <person name="Smith H.O."/>
            <person name="Gibbs R.A."/>
            <person name="Myers E.W."/>
            <person name="Rubin G.M."/>
            <person name="Venter J.C."/>
        </authorList>
    </citation>
    <scope>NUCLEOTIDE SEQUENCE [LARGE SCALE GENOMIC DNA]</scope>
    <source>
        <strain>Berkeley</strain>
    </source>
</reference>
<reference key="2">
    <citation type="journal article" date="2002" name="Genome Biol.">
        <title>Annotation of the Drosophila melanogaster euchromatic genome: a systematic review.</title>
        <authorList>
            <person name="Misra S."/>
            <person name="Crosby M.A."/>
            <person name="Mungall C.J."/>
            <person name="Matthews B.B."/>
            <person name="Campbell K.S."/>
            <person name="Hradecky P."/>
            <person name="Huang Y."/>
            <person name="Kaminker J.S."/>
            <person name="Millburn G.H."/>
            <person name="Prochnik S.E."/>
            <person name="Smith C.D."/>
            <person name="Tupy J.L."/>
            <person name="Whitfield E.J."/>
            <person name="Bayraktaroglu L."/>
            <person name="Berman B.P."/>
            <person name="Bettencourt B.R."/>
            <person name="Celniker S.E."/>
            <person name="de Grey A.D.N.J."/>
            <person name="Drysdale R.A."/>
            <person name="Harris N.L."/>
            <person name="Richter J."/>
            <person name="Russo S."/>
            <person name="Schroeder A.J."/>
            <person name="Shu S.Q."/>
            <person name="Stapleton M."/>
            <person name="Yamada C."/>
            <person name="Ashburner M."/>
            <person name="Gelbart W.M."/>
            <person name="Rubin G.M."/>
            <person name="Lewis S.E."/>
        </authorList>
    </citation>
    <scope>GENOME REANNOTATION</scope>
    <source>
        <strain>Berkeley</strain>
    </source>
</reference>
<reference key="3">
    <citation type="submission" date="2007-10" db="EMBL/GenBank/DDBJ databases">
        <authorList>
            <person name="Stapleton M."/>
            <person name="Carlson J.W."/>
            <person name="Frise E."/>
            <person name="Kapadia B."/>
            <person name="Park S."/>
            <person name="Wan K.H."/>
            <person name="Yu C."/>
            <person name="Celniker S.E."/>
        </authorList>
    </citation>
    <scope>NUCLEOTIDE SEQUENCE [LARGE SCALE MRNA]</scope>
    <source>
        <strain>Berkeley</strain>
    </source>
</reference>
<reference key="4">
    <citation type="journal article" date="2013" name="Nature">
        <title>Structures of the human and Drosophila 80S ribosome.</title>
        <authorList>
            <person name="Anger A.M."/>
            <person name="Armache J.P."/>
            <person name="Berninghausen O."/>
            <person name="Habeck M."/>
            <person name="Subklewe M."/>
            <person name="Wilson D.N."/>
            <person name="Beckmann R."/>
        </authorList>
    </citation>
    <scope>STRUCTURE BY ELECTRON MICROSCOPY (6.0 ANGSTROMS) OF THE 80S RIBOSOME</scope>
</reference>
<name>RL371_DROME</name>
<evidence type="ECO:0000250" key="1"/>
<evidence type="ECO:0000255" key="2"/>
<evidence type="ECO:0000305" key="3"/>
<evidence type="ECO:0000312" key="4">
    <source>
        <dbReference type="FlyBase" id="FBgn0030616"/>
    </source>
</evidence>
<sequence>MTKGTSSFGKRHNKTHTLCRRCGRSSYHIQKSTCAQCGYPAAKLRSYNWSVKAKRRKTTGTGRMQHLKVVRRRFRNGFREGTQAKPKKAVASK</sequence>
<keyword id="KW-0002">3D-structure</keyword>
<keyword id="KW-0479">Metal-binding</keyword>
<keyword id="KW-1185">Reference proteome</keyword>
<keyword id="KW-0687">Ribonucleoprotein</keyword>
<keyword id="KW-0689">Ribosomal protein</keyword>
<keyword id="KW-0694">RNA-binding</keyword>
<keyword id="KW-0699">rRNA-binding</keyword>
<keyword id="KW-0862">Zinc</keyword>
<keyword id="KW-0863">Zinc-finger</keyword>
<accession>Q9VXX8</accession>
<accession>A8E7A3</accession>
<protein>
    <recommendedName>
        <fullName evidence="3">Large ribosomal subunit protein eL37A</fullName>
    </recommendedName>
    <alternativeName>
        <fullName evidence="3">Probable 60S ribosomal protein L37-A</fullName>
    </alternativeName>
    <alternativeName>
        <fullName evidence="4">Ribosomal protein L37-1</fullName>
    </alternativeName>
</protein>
<organism>
    <name type="scientific">Drosophila melanogaster</name>
    <name type="common">Fruit fly</name>
    <dbReference type="NCBI Taxonomy" id="7227"/>
    <lineage>
        <taxon>Eukaryota</taxon>
        <taxon>Metazoa</taxon>
        <taxon>Ecdysozoa</taxon>
        <taxon>Arthropoda</taxon>
        <taxon>Hexapoda</taxon>
        <taxon>Insecta</taxon>
        <taxon>Pterygota</taxon>
        <taxon>Neoptera</taxon>
        <taxon>Endopterygota</taxon>
        <taxon>Diptera</taxon>
        <taxon>Brachycera</taxon>
        <taxon>Muscomorpha</taxon>
        <taxon>Ephydroidea</taxon>
        <taxon>Drosophilidae</taxon>
        <taxon>Drosophila</taxon>
        <taxon>Sophophora</taxon>
    </lineage>
</organism>
<comment type="function">
    <text evidence="1">Binds to the 23S rRNA.</text>
</comment>
<comment type="cofactor">
    <cofactor evidence="1">
        <name>Zn(2+)</name>
        <dbReference type="ChEBI" id="CHEBI:29105"/>
    </cofactor>
    <text evidence="1">Binds 1 zinc ion per subunit.</text>
</comment>
<comment type="similarity">
    <text evidence="3">Belongs to the eukaryotic ribosomal protein eL37 family.</text>
</comment>